<proteinExistence type="inferred from homology"/>
<dbReference type="EMBL" id="CP001096">
    <property type="protein sequence ID" value="ACF02151.1"/>
    <property type="molecule type" value="Genomic_DNA"/>
</dbReference>
<dbReference type="RefSeq" id="WP_011158779.1">
    <property type="nucleotide sequence ID" value="NC_011004.1"/>
</dbReference>
<dbReference type="SMR" id="B3QBW4"/>
<dbReference type="GeneID" id="66894320"/>
<dbReference type="KEGG" id="rpt:Rpal_3651"/>
<dbReference type="HOGENOM" id="CLU_098841_0_1_5"/>
<dbReference type="OrthoDB" id="9810939at2"/>
<dbReference type="Proteomes" id="UP000001725">
    <property type="component" value="Chromosome"/>
</dbReference>
<dbReference type="GO" id="GO:0022625">
    <property type="term" value="C:cytosolic large ribosomal subunit"/>
    <property type="evidence" value="ECO:0007669"/>
    <property type="project" value="TreeGrafter"/>
</dbReference>
<dbReference type="GO" id="GO:0008097">
    <property type="term" value="F:5S rRNA binding"/>
    <property type="evidence" value="ECO:0007669"/>
    <property type="project" value="TreeGrafter"/>
</dbReference>
<dbReference type="GO" id="GO:0003735">
    <property type="term" value="F:structural constituent of ribosome"/>
    <property type="evidence" value="ECO:0007669"/>
    <property type="project" value="InterPro"/>
</dbReference>
<dbReference type="GO" id="GO:0006412">
    <property type="term" value="P:translation"/>
    <property type="evidence" value="ECO:0007669"/>
    <property type="project" value="UniProtKB-UniRule"/>
</dbReference>
<dbReference type="CDD" id="cd00432">
    <property type="entry name" value="Ribosomal_L18_L5e"/>
    <property type="match status" value="1"/>
</dbReference>
<dbReference type="FunFam" id="3.30.420.100:FF:000001">
    <property type="entry name" value="50S ribosomal protein L18"/>
    <property type="match status" value="1"/>
</dbReference>
<dbReference type="Gene3D" id="3.30.420.100">
    <property type="match status" value="1"/>
</dbReference>
<dbReference type="HAMAP" id="MF_01337_B">
    <property type="entry name" value="Ribosomal_uL18_B"/>
    <property type="match status" value="1"/>
</dbReference>
<dbReference type="InterPro" id="IPR004389">
    <property type="entry name" value="Ribosomal_uL18_bac-type"/>
</dbReference>
<dbReference type="InterPro" id="IPR005484">
    <property type="entry name" value="Ribosomal_uL18_bac/euk"/>
</dbReference>
<dbReference type="NCBIfam" id="TIGR00060">
    <property type="entry name" value="L18_bact"/>
    <property type="match status" value="1"/>
</dbReference>
<dbReference type="PANTHER" id="PTHR12899">
    <property type="entry name" value="39S RIBOSOMAL PROTEIN L18, MITOCHONDRIAL"/>
    <property type="match status" value="1"/>
</dbReference>
<dbReference type="PANTHER" id="PTHR12899:SF3">
    <property type="entry name" value="LARGE RIBOSOMAL SUBUNIT PROTEIN UL18M"/>
    <property type="match status" value="1"/>
</dbReference>
<dbReference type="Pfam" id="PF00861">
    <property type="entry name" value="Ribosomal_L18p"/>
    <property type="match status" value="1"/>
</dbReference>
<dbReference type="SUPFAM" id="SSF53137">
    <property type="entry name" value="Translational machinery components"/>
    <property type="match status" value="1"/>
</dbReference>
<sequence length="120" mass="13037">MSKMKITNARRTNRVRTALRRTANGRPRLSVFRSSKHIYAQVIDDAKGETLASASSLEKTMRDAGNTGANIDAAKAVGKLVAERAVEKGVKEVVFDRGGYLYHGRVKALADAARESGLSF</sequence>
<gene>
    <name evidence="1" type="primary">rplR</name>
    <name type="ordered locus">Rpal_3651</name>
</gene>
<name>RL18_RHOPT</name>
<comment type="function">
    <text evidence="1">This is one of the proteins that bind and probably mediate the attachment of the 5S RNA into the large ribosomal subunit, where it forms part of the central protuberance.</text>
</comment>
<comment type="subunit">
    <text evidence="1">Part of the 50S ribosomal subunit; part of the 5S rRNA/L5/L18/L25 subcomplex. Contacts the 5S and 23S rRNAs.</text>
</comment>
<comment type="similarity">
    <text evidence="1">Belongs to the universal ribosomal protein uL18 family.</text>
</comment>
<feature type="chain" id="PRO_1000142710" description="Large ribosomal subunit protein uL18">
    <location>
        <begin position="1"/>
        <end position="120"/>
    </location>
</feature>
<keyword id="KW-0687">Ribonucleoprotein</keyword>
<keyword id="KW-0689">Ribosomal protein</keyword>
<keyword id="KW-0694">RNA-binding</keyword>
<keyword id="KW-0699">rRNA-binding</keyword>
<organism>
    <name type="scientific">Rhodopseudomonas palustris (strain TIE-1)</name>
    <dbReference type="NCBI Taxonomy" id="395960"/>
    <lineage>
        <taxon>Bacteria</taxon>
        <taxon>Pseudomonadati</taxon>
        <taxon>Pseudomonadota</taxon>
        <taxon>Alphaproteobacteria</taxon>
        <taxon>Hyphomicrobiales</taxon>
        <taxon>Nitrobacteraceae</taxon>
        <taxon>Rhodopseudomonas</taxon>
    </lineage>
</organism>
<protein>
    <recommendedName>
        <fullName evidence="1">Large ribosomal subunit protein uL18</fullName>
    </recommendedName>
    <alternativeName>
        <fullName evidence="2">50S ribosomal protein L18</fullName>
    </alternativeName>
</protein>
<accession>B3QBW4</accession>
<reference key="1">
    <citation type="submission" date="2008-05" db="EMBL/GenBank/DDBJ databases">
        <title>Complete sequence of Rhodopseudomonas palustris TIE-1.</title>
        <authorList>
            <consortium name="US DOE Joint Genome Institute"/>
            <person name="Lucas S."/>
            <person name="Copeland A."/>
            <person name="Lapidus A."/>
            <person name="Glavina del Rio T."/>
            <person name="Dalin E."/>
            <person name="Tice H."/>
            <person name="Pitluck S."/>
            <person name="Chain P."/>
            <person name="Malfatti S."/>
            <person name="Shin M."/>
            <person name="Vergez L."/>
            <person name="Lang D."/>
            <person name="Schmutz J."/>
            <person name="Larimer F."/>
            <person name="Land M."/>
            <person name="Hauser L."/>
            <person name="Kyrpides N."/>
            <person name="Mikhailova N."/>
            <person name="Emerson D."/>
            <person name="Newman D.K."/>
            <person name="Roden E."/>
            <person name="Richardson P."/>
        </authorList>
    </citation>
    <scope>NUCLEOTIDE SEQUENCE [LARGE SCALE GENOMIC DNA]</scope>
    <source>
        <strain>TIE-1</strain>
    </source>
</reference>
<evidence type="ECO:0000255" key="1">
    <source>
        <dbReference type="HAMAP-Rule" id="MF_01337"/>
    </source>
</evidence>
<evidence type="ECO:0000305" key="2"/>